<accession>Q30TM4</accession>
<sequence length="352" mass="38239">MINRVKTKQIFVGNVAVGGDSPISVQSMTFSKTSDVFSTVEQIKRLHFAGCDIVRVAVPEMEDALALRAIKEQISLPLVADIHFNYRLALIAAEVVDCIRINPGNIGSRERVKEVVKACQERNIPIRIGVNAGSLEKEFLNKYGQTSEGMVASAEYNIKFLEDLGFDDIKISLKASDVQRTVDAYRMLRPKNNYPFHLGVTEAGTLFHATVKSSIGLGALLLDGIGDTMRVSITGELEEEINVARAILKDSGAAKDGLNIISCPTCGRIEADLVSAVGEIERRTTHIKAPLNVSVMGCVVNAIGEAAHADIAIAYGKGKGLVMVKGEVVANLDEHELVDRFVQEVEKMAKEF</sequence>
<proteinExistence type="inferred from homology"/>
<reference key="1">
    <citation type="journal article" date="2008" name="Appl. Environ. Microbiol.">
        <title>Genome of the epsilonproteobacterial chemolithoautotroph Sulfurimonas denitrificans.</title>
        <authorList>
            <person name="Sievert S.M."/>
            <person name="Scott K.M."/>
            <person name="Klotz M.G."/>
            <person name="Chain P.S.G."/>
            <person name="Hauser L.J."/>
            <person name="Hemp J."/>
            <person name="Huegler M."/>
            <person name="Land M."/>
            <person name="Lapidus A."/>
            <person name="Larimer F.W."/>
            <person name="Lucas S."/>
            <person name="Malfatti S.A."/>
            <person name="Meyer F."/>
            <person name="Paulsen I.T."/>
            <person name="Ren Q."/>
            <person name="Simon J."/>
            <person name="Bailey K."/>
            <person name="Diaz E."/>
            <person name="Fitzpatrick K.A."/>
            <person name="Glover B."/>
            <person name="Gwatney N."/>
            <person name="Korajkic A."/>
            <person name="Long A."/>
            <person name="Mobberley J.M."/>
            <person name="Pantry S.N."/>
            <person name="Pazder G."/>
            <person name="Peterson S."/>
            <person name="Quintanilla J.D."/>
            <person name="Sprinkle R."/>
            <person name="Stephens J."/>
            <person name="Thomas P."/>
            <person name="Vaughn R."/>
            <person name="Weber M.J."/>
            <person name="Wooten L.L."/>
        </authorList>
    </citation>
    <scope>NUCLEOTIDE SEQUENCE [LARGE SCALE GENOMIC DNA]</scope>
    <source>
        <strain>ATCC 33889 / DSM 1251</strain>
    </source>
</reference>
<evidence type="ECO:0000255" key="1">
    <source>
        <dbReference type="HAMAP-Rule" id="MF_00159"/>
    </source>
</evidence>
<name>ISPG_SULDN</name>
<dbReference type="EC" id="1.17.7.3" evidence="1"/>
<dbReference type="EMBL" id="CP000153">
    <property type="protein sequence ID" value="ABB43657.1"/>
    <property type="molecule type" value="Genomic_DNA"/>
</dbReference>
<dbReference type="RefSeq" id="WP_011372011.1">
    <property type="nucleotide sequence ID" value="NC_007575.1"/>
</dbReference>
<dbReference type="SMR" id="Q30TM4"/>
<dbReference type="STRING" id="326298.Suden_0376"/>
<dbReference type="KEGG" id="tdn:Suden_0376"/>
<dbReference type="eggNOG" id="COG0821">
    <property type="taxonomic scope" value="Bacteria"/>
</dbReference>
<dbReference type="HOGENOM" id="CLU_042258_0_0_7"/>
<dbReference type="OrthoDB" id="9803214at2"/>
<dbReference type="UniPathway" id="UPA00056">
    <property type="reaction ID" value="UER00096"/>
</dbReference>
<dbReference type="Proteomes" id="UP000002714">
    <property type="component" value="Chromosome"/>
</dbReference>
<dbReference type="GO" id="GO:0051539">
    <property type="term" value="F:4 iron, 4 sulfur cluster binding"/>
    <property type="evidence" value="ECO:0007669"/>
    <property type="project" value="UniProtKB-UniRule"/>
</dbReference>
<dbReference type="GO" id="GO:0046429">
    <property type="term" value="F:4-hydroxy-3-methylbut-2-en-1-yl diphosphate synthase activity (ferredoxin)"/>
    <property type="evidence" value="ECO:0007669"/>
    <property type="project" value="UniProtKB-UniRule"/>
</dbReference>
<dbReference type="GO" id="GO:0141197">
    <property type="term" value="F:4-hydroxy-3-methylbut-2-enyl-diphosphate synthase activity (flavodoxin)"/>
    <property type="evidence" value="ECO:0007669"/>
    <property type="project" value="UniProtKB-EC"/>
</dbReference>
<dbReference type="GO" id="GO:0005506">
    <property type="term" value="F:iron ion binding"/>
    <property type="evidence" value="ECO:0007669"/>
    <property type="project" value="InterPro"/>
</dbReference>
<dbReference type="GO" id="GO:0019288">
    <property type="term" value="P:isopentenyl diphosphate biosynthetic process, methylerythritol 4-phosphate pathway"/>
    <property type="evidence" value="ECO:0007669"/>
    <property type="project" value="UniProtKB-UniRule"/>
</dbReference>
<dbReference type="GO" id="GO:0016114">
    <property type="term" value="P:terpenoid biosynthetic process"/>
    <property type="evidence" value="ECO:0007669"/>
    <property type="project" value="InterPro"/>
</dbReference>
<dbReference type="FunFam" id="3.20.20.20:FF:000001">
    <property type="entry name" value="4-hydroxy-3-methylbut-2-en-1-yl diphosphate synthase (flavodoxin)"/>
    <property type="match status" value="1"/>
</dbReference>
<dbReference type="Gene3D" id="3.20.20.20">
    <property type="entry name" value="Dihydropteroate synthase-like"/>
    <property type="match status" value="1"/>
</dbReference>
<dbReference type="Gene3D" id="3.30.413.10">
    <property type="entry name" value="Sulfite Reductase Hemoprotein, domain 1"/>
    <property type="match status" value="1"/>
</dbReference>
<dbReference type="HAMAP" id="MF_00159">
    <property type="entry name" value="IspG"/>
    <property type="match status" value="1"/>
</dbReference>
<dbReference type="InterPro" id="IPR011005">
    <property type="entry name" value="Dihydropteroate_synth-like_sf"/>
</dbReference>
<dbReference type="InterPro" id="IPR016425">
    <property type="entry name" value="IspG_bac"/>
</dbReference>
<dbReference type="InterPro" id="IPR004588">
    <property type="entry name" value="IspG_bac-typ"/>
</dbReference>
<dbReference type="InterPro" id="IPR045854">
    <property type="entry name" value="NO2/SO3_Rdtase_4Fe4S_sf"/>
</dbReference>
<dbReference type="NCBIfam" id="TIGR00612">
    <property type="entry name" value="ispG_gcpE"/>
    <property type="match status" value="1"/>
</dbReference>
<dbReference type="NCBIfam" id="NF001540">
    <property type="entry name" value="PRK00366.1"/>
    <property type="match status" value="1"/>
</dbReference>
<dbReference type="PANTHER" id="PTHR30454">
    <property type="entry name" value="4-HYDROXY-3-METHYLBUT-2-EN-1-YL DIPHOSPHATE SYNTHASE"/>
    <property type="match status" value="1"/>
</dbReference>
<dbReference type="PANTHER" id="PTHR30454:SF0">
    <property type="entry name" value="4-HYDROXY-3-METHYLBUT-2-EN-1-YL DIPHOSPHATE SYNTHASE (FERREDOXIN), CHLOROPLASTIC"/>
    <property type="match status" value="1"/>
</dbReference>
<dbReference type="Pfam" id="PF04551">
    <property type="entry name" value="GcpE"/>
    <property type="match status" value="1"/>
</dbReference>
<dbReference type="PIRSF" id="PIRSF004640">
    <property type="entry name" value="IspG"/>
    <property type="match status" value="1"/>
</dbReference>
<dbReference type="SUPFAM" id="SSF51717">
    <property type="entry name" value="Dihydropteroate synthetase-like"/>
    <property type="match status" value="1"/>
</dbReference>
<dbReference type="SUPFAM" id="SSF56014">
    <property type="entry name" value="Nitrite and sulphite reductase 4Fe-4S domain-like"/>
    <property type="match status" value="1"/>
</dbReference>
<organism>
    <name type="scientific">Sulfurimonas denitrificans (strain ATCC 33889 / DSM 1251)</name>
    <name type="common">Thiomicrospira denitrificans (strain ATCC 33889 / DSM 1251)</name>
    <dbReference type="NCBI Taxonomy" id="326298"/>
    <lineage>
        <taxon>Bacteria</taxon>
        <taxon>Pseudomonadati</taxon>
        <taxon>Campylobacterota</taxon>
        <taxon>Epsilonproteobacteria</taxon>
        <taxon>Campylobacterales</taxon>
        <taxon>Sulfurimonadaceae</taxon>
        <taxon>Sulfurimonas</taxon>
    </lineage>
</organism>
<protein>
    <recommendedName>
        <fullName evidence="1">4-hydroxy-3-methylbut-2-en-1-yl diphosphate synthase (flavodoxin)</fullName>
        <ecNumber evidence="1">1.17.7.3</ecNumber>
    </recommendedName>
    <alternativeName>
        <fullName evidence="1">1-hydroxy-2-methyl-2-(E)-butenyl 4-diphosphate synthase</fullName>
    </alternativeName>
</protein>
<comment type="function">
    <text evidence="1">Converts 2C-methyl-D-erythritol 2,4-cyclodiphosphate (ME-2,4cPP) into 1-hydroxy-2-methyl-2-(E)-butenyl 4-diphosphate.</text>
</comment>
<comment type="catalytic activity">
    <reaction evidence="1">
        <text>(2E)-4-hydroxy-3-methylbut-2-enyl diphosphate + oxidized [flavodoxin] + H2O + 2 H(+) = 2-C-methyl-D-erythritol 2,4-cyclic diphosphate + reduced [flavodoxin]</text>
        <dbReference type="Rhea" id="RHEA:43604"/>
        <dbReference type="Rhea" id="RHEA-COMP:10622"/>
        <dbReference type="Rhea" id="RHEA-COMP:10623"/>
        <dbReference type="ChEBI" id="CHEBI:15377"/>
        <dbReference type="ChEBI" id="CHEBI:15378"/>
        <dbReference type="ChEBI" id="CHEBI:57618"/>
        <dbReference type="ChEBI" id="CHEBI:58210"/>
        <dbReference type="ChEBI" id="CHEBI:58483"/>
        <dbReference type="ChEBI" id="CHEBI:128753"/>
        <dbReference type="EC" id="1.17.7.3"/>
    </reaction>
</comment>
<comment type="cofactor">
    <cofactor evidence="1">
        <name>[4Fe-4S] cluster</name>
        <dbReference type="ChEBI" id="CHEBI:49883"/>
    </cofactor>
    <text evidence="1">Binds 1 [4Fe-4S] cluster.</text>
</comment>
<comment type="pathway">
    <text evidence="1">Isoprenoid biosynthesis; isopentenyl diphosphate biosynthesis via DXP pathway; isopentenyl diphosphate from 1-deoxy-D-xylulose 5-phosphate: step 5/6.</text>
</comment>
<comment type="similarity">
    <text evidence="1">Belongs to the IspG family.</text>
</comment>
<feature type="chain" id="PRO_1000071541" description="4-hydroxy-3-methylbut-2-en-1-yl diphosphate synthase (flavodoxin)">
    <location>
        <begin position="1"/>
        <end position="352"/>
    </location>
</feature>
<feature type="binding site" evidence="1">
    <location>
        <position position="263"/>
    </location>
    <ligand>
        <name>[4Fe-4S] cluster</name>
        <dbReference type="ChEBI" id="CHEBI:49883"/>
    </ligand>
</feature>
<feature type="binding site" evidence="1">
    <location>
        <position position="266"/>
    </location>
    <ligand>
        <name>[4Fe-4S] cluster</name>
        <dbReference type="ChEBI" id="CHEBI:49883"/>
    </ligand>
</feature>
<feature type="binding site" evidence="1">
    <location>
        <position position="298"/>
    </location>
    <ligand>
        <name>[4Fe-4S] cluster</name>
        <dbReference type="ChEBI" id="CHEBI:49883"/>
    </ligand>
</feature>
<feature type="binding site" evidence="1">
    <location>
        <position position="305"/>
    </location>
    <ligand>
        <name>[4Fe-4S] cluster</name>
        <dbReference type="ChEBI" id="CHEBI:49883"/>
    </ligand>
</feature>
<gene>
    <name evidence="1" type="primary">ispG</name>
    <name type="ordered locus">Suden_0376</name>
</gene>
<keyword id="KW-0004">4Fe-4S</keyword>
<keyword id="KW-0408">Iron</keyword>
<keyword id="KW-0411">Iron-sulfur</keyword>
<keyword id="KW-0414">Isoprene biosynthesis</keyword>
<keyword id="KW-0479">Metal-binding</keyword>
<keyword id="KW-0560">Oxidoreductase</keyword>
<keyword id="KW-1185">Reference proteome</keyword>